<name>MURC_BORGP</name>
<reference key="1">
    <citation type="journal article" date="2004" name="Nucleic Acids Res.">
        <title>Comparative analysis of the Borrelia garinii genome.</title>
        <authorList>
            <person name="Gloeckner G."/>
            <person name="Lehmann R."/>
            <person name="Romualdi A."/>
            <person name="Pradella S."/>
            <person name="Schulte-Spechtel U."/>
            <person name="Schilhabel M."/>
            <person name="Wilske B."/>
            <person name="Suehnel J."/>
            <person name="Platzer M."/>
        </authorList>
    </citation>
    <scope>NUCLEOTIDE SEQUENCE [LARGE SCALE GENOMIC DNA]</scope>
    <source>
        <strain>ATCC BAA-2496 / DSM 23469 / PBi</strain>
    </source>
</reference>
<feature type="chain" id="PRO_0000182062" description="UDP-N-acetylmuramate--L-alanine ligase">
    <location>
        <begin position="1"/>
        <end position="468"/>
    </location>
</feature>
<feature type="binding site" evidence="1">
    <location>
        <begin position="121"/>
        <end position="127"/>
    </location>
    <ligand>
        <name>ATP</name>
        <dbReference type="ChEBI" id="CHEBI:30616"/>
    </ligand>
</feature>
<protein>
    <recommendedName>
        <fullName evidence="1">UDP-N-acetylmuramate--L-alanine ligase</fullName>
        <ecNumber evidence="1">6.3.2.8</ecNumber>
    </recommendedName>
    <alternativeName>
        <fullName evidence="1">UDP-N-acetylmuramoyl-L-alanine synthetase</fullName>
    </alternativeName>
</protein>
<organism>
    <name type="scientific">Borrelia garinii subsp. bavariensis (strain ATCC BAA-2496 / DSM 23469 / PBi)</name>
    <name type="common">Borreliella bavariensis</name>
    <dbReference type="NCBI Taxonomy" id="290434"/>
    <lineage>
        <taxon>Bacteria</taxon>
        <taxon>Pseudomonadati</taxon>
        <taxon>Spirochaetota</taxon>
        <taxon>Spirochaetia</taxon>
        <taxon>Spirochaetales</taxon>
        <taxon>Borreliaceae</taxon>
        <taxon>Borreliella</taxon>
    </lineage>
</organism>
<dbReference type="EC" id="6.3.2.8" evidence="1"/>
<dbReference type="EMBL" id="CP000013">
    <property type="protein sequence ID" value="AAU07664.1"/>
    <property type="molecule type" value="Genomic_DNA"/>
</dbReference>
<dbReference type="RefSeq" id="WP_011194108.1">
    <property type="nucleotide sequence ID" value="NZ_CP028872.1"/>
</dbReference>
<dbReference type="SMR" id="Q65ZV7"/>
<dbReference type="GeneID" id="45161616"/>
<dbReference type="KEGG" id="bga:BG0842"/>
<dbReference type="eggNOG" id="COG0773">
    <property type="taxonomic scope" value="Bacteria"/>
</dbReference>
<dbReference type="HOGENOM" id="CLU_028104_1_0_12"/>
<dbReference type="OrthoDB" id="9804126at2"/>
<dbReference type="UniPathway" id="UPA00219"/>
<dbReference type="Proteomes" id="UP000002276">
    <property type="component" value="Chromosome"/>
</dbReference>
<dbReference type="GO" id="GO:0005737">
    <property type="term" value="C:cytoplasm"/>
    <property type="evidence" value="ECO:0007669"/>
    <property type="project" value="UniProtKB-SubCell"/>
</dbReference>
<dbReference type="GO" id="GO:0005524">
    <property type="term" value="F:ATP binding"/>
    <property type="evidence" value="ECO:0007669"/>
    <property type="project" value="UniProtKB-UniRule"/>
</dbReference>
<dbReference type="GO" id="GO:0008763">
    <property type="term" value="F:UDP-N-acetylmuramate-L-alanine ligase activity"/>
    <property type="evidence" value="ECO:0007669"/>
    <property type="project" value="UniProtKB-UniRule"/>
</dbReference>
<dbReference type="GO" id="GO:0051301">
    <property type="term" value="P:cell division"/>
    <property type="evidence" value="ECO:0007669"/>
    <property type="project" value="UniProtKB-KW"/>
</dbReference>
<dbReference type="GO" id="GO:0071555">
    <property type="term" value="P:cell wall organization"/>
    <property type="evidence" value="ECO:0007669"/>
    <property type="project" value="UniProtKB-KW"/>
</dbReference>
<dbReference type="GO" id="GO:0009252">
    <property type="term" value="P:peptidoglycan biosynthetic process"/>
    <property type="evidence" value="ECO:0007669"/>
    <property type="project" value="UniProtKB-UniRule"/>
</dbReference>
<dbReference type="GO" id="GO:0008360">
    <property type="term" value="P:regulation of cell shape"/>
    <property type="evidence" value="ECO:0007669"/>
    <property type="project" value="UniProtKB-KW"/>
</dbReference>
<dbReference type="Gene3D" id="3.90.190.20">
    <property type="entry name" value="Mur ligase, C-terminal domain"/>
    <property type="match status" value="1"/>
</dbReference>
<dbReference type="Gene3D" id="3.40.1190.10">
    <property type="entry name" value="Mur-like, catalytic domain"/>
    <property type="match status" value="1"/>
</dbReference>
<dbReference type="Gene3D" id="3.40.50.720">
    <property type="entry name" value="NAD(P)-binding Rossmann-like Domain"/>
    <property type="match status" value="1"/>
</dbReference>
<dbReference type="HAMAP" id="MF_00046">
    <property type="entry name" value="MurC"/>
    <property type="match status" value="1"/>
</dbReference>
<dbReference type="InterPro" id="IPR036565">
    <property type="entry name" value="Mur-like_cat_sf"/>
</dbReference>
<dbReference type="InterPro" id="IPR004101">
    <property type="entry name" value="Mur_ligase_C"/>
</dbReference>
<dbReference type="InterPro" id="IPR036615">
    <property type="entry name" value="Mur_ligase_C_dom_sf"/>
</dbReference>
<dbReference type="InterPro" id="IPR013221">
    <property type="entry name" value="Mur_ligase_cen"/>
</dbReference>
<dbReference type="InterPro" id="IPR000713">
    <property type="entry name" value="Mur_ligase_N"/>
</dbReference>
<dbReference type="InterPro" id="IPR050061">
    <property type="entry name" value="MurCDEF_pg_biosynth"/>
</dbReference>
<dbReference type="InterPro" id="IPR005758">
    <property type="entry name" value="UDP-N-AcMur_Ala_ligase_MurC"/>
</dbReference>
<dbReference type="NCBIfam" id="TIGR01082">
    <property type="entry name" value="murC"/>
    <property type="match status" value="1"/>
</dbReference>
<dbReference type="PANTHER" id="PTHR43445:SF3">
    <property type="entry name" value="UDP-N-ACETYLMURAMATE--L-ALANINE LIGASE"/>
    <property type="match status" value="1"/>
</dbReference>
<dbReference type="PANTHER" id="PTHR43445">
    <property type="entry name" value="UDP-N-ACETYLMURAMATE--L-ALANINE LIGASE-RELATED"/>
    <property type="match status" value="1"/>
</dbReference>
<dbReference type="Pfam" id="PF01225">
    <property type="entry name" value="Mur_ligase"/>
    <property type="match status" value="1"/>
</dbReference>
<dbReference type="Pfam" id="PF02875">
    <property type="entry name" value="Mur_ligase_C"/>
    <property type="match status" value="1"/>
</dbReference>
<dbReference type="Pfam" id="PF08245">
    <property type="entry name" value="Mur_ligase_M"/>
    <property type="match status" value="1"/>
</dbReference>
<dbReference type="SUPFAM" id="SSF51984">
    <property type="entry name" value="MurCD N-terminal domain"/>
    <property type="match status" value="1"/>
</dbReference>
<dbReference type="SUPFAM" id="SSF53623">
    <property type="entry name" value="MurD-like peptide ligases, catalytic domain"/>
    <property type="match status" value="1"/>
</dbReference>
<dbReference type="SUPFAM" id="SSF53244">
    <property type="entry name" value="MurD-like peptide ligases, peptide-binding domain"/>
    <property type="match status" value="1"/>
</dbReference>
<comment type="function">
    <text evidence="1">Cell wall formation.</text>
</comment>
<comment type="catalytic activity">
    <reaction evidence="1">
        <text>UDP-N-acetyl-alpha-D-muramate + L-alanine + ATP = UDP-N-acetyl-alpha-D-muramoyl-L-alanine + ADP + phosphate + H(+)</text>
        <dbReference type="Rhea" id="RHEA:23372"/>
        <dbReference type="ChEBI" id="CHEBI:15378"/>
        <dbReference type="ChEBI" id="CHEBI:30616"/>
        <dbReference type="ChEBI" id="CHEBI:43474"/>
        <dbReference type="ChEBI" id="CHEBI:57972"/>
        <dbReference type="ChEBI" id="CHEBI:70757"/>
        <dbReference type="ChEBI" id="CHEBI:83898"/>
        <dbReference type="ChEBI" id="CHEBI:456216"/>
        <dbReference type="EC" id="6.3.2.8"/>
    </reaction>
</comment>
<comment type="pathway">
    <text evidence="1">Cell wall biogenesis; peptidoglycan biosynthesis.</text>
</comment>
<comment type="subcellular location">
    <subcellularLocation>
        <location evidence="1">Cytoplasm</location>
    </subcellularLocation>
</comment>
<comment type="similarity">
    <text evidence="1">Belongs to the MurCDEF family.</text>
</comment>
<accession>Q65ZV7</accession>
<proteinExistence type="inferred from homology"/>
<gene>
    <name evidence="1" type="primary">murC</name>
    <name type="ordered locus">BG0842</name>
</gene>
<evidence type="ECO:0000255" key="1">
    <source>
        <dbReference type="HAMAP-Rule" id="MF_00046"/>
    </source>
</evidence>
<keyword id="KW-0067">ATP-binding</keyword>
<keyword id="KW-0131">Cell cycle</keyword>
<keyword id="KW-0132">Cell division</keyword>
<keyword id="KW-0133">Cell shape</keyword>
<keyword id="KW-0961">Cell wall biogenesis/degradation</keyword>
<keyword id="KW-0963">Cytoplasm</keyword>
<keyword id="KW-0436">Ligase</keyword>
<keyword id="KW-0547">Nucleotide-binding</keyword>
<keyword id="KW-0573">Peptidoglycan synthesis</keyword>
<sequence>MKVDFDSLNNIFFVGIKGSGVCSLACFLNSKGYFVEGVDVPDKFYTDDILNNNEISYYENIYEFSLKELDRSFDLIVYSSAYDKDGLQVLLEAKELNIPILSYSEVLGELSRKHYSIGIAGSHGKTTTTAFLGILFDKLGLNPNVIVGSSVKDFGDNSAIAGISDIFIVETCEYKKHFLYFSPNMLILTNVDYEHVDFFKNYEALEDAFLQYINNLKKNGILIINSDDKNLLKIKSQINREDINIFSFGSRDLSNFQISNIVVKNEYFCFSFLGLYNIELRTVLFHNILNFSAALLALNLFLESNGKSIFDFEEVVKRVAKNYSGIKRRSELIKEKKGVIYMDDYAHHPREIRATLFGIKNFYKNKRIILDFMPHTFTRTKEFFDDFVEVLNIADVLILHNIYLSNRENFNPDELSFKLFLNIKKINKNTYFFKDVKDSINFIKSLLISGDLFITMGAGNNFILHDFL</sequence>